<proteinExistence type="inferred from homology"/>
<name>RS19_THEVO</name>
<accession>Q97BX3</accession>
<sequence>MVVNKQGSVKSIKRKARKSRKVTTGRAKEFSYKGYTLEQLQEMSLEELIKILPARARRSLSREMNHDQKKLVEKLEGDYDDIKTHVRDVIILPSYVGKIVEVYNGNSYSKFEIKPEMIGHYLGEFVMTRKEVKHSGPGVGATRSSKFMPLK</sequence>
<protein>
    <recommendedName>
        <fullName evidence="3">Small ribosomal subunit protein uS19</fullName>
    </recommendedName>
    <alternativeName>
        <fullName>30S ribosomal protein S19</fullName>
    </alternativeName>
</protein>
<keyword id="KW-0687">Ribonucleoprotein</keyword>
<keyword id="KW-0689">Ribosomal protein</keyword>
<keyword id="KW-0694">RNA-binding</keyword>
<keyword id="KW-0699">rRNA-binding</keyword>
<gene>
    <name type="primary">rps19</name>
    <name type="ordered locus">TV0332</name>
    <name type="ORF">TVG0335396</name>
</gene>
<feature type="chain" id="PRO_0000130018" description="Small ribosomal subunit protein uS19">
    <location>
        <begin position="1"/>
        <end position="151"/>
    </location>
</feature>
<feature type="region of interest" description="Disordered" evidence="2">
    <location>
        <begin position="1"/>
        <end position="23"/>
    </location>
</feature>
<feature type="compositionally biased region" description="Basic residues" evidence="2">
    <location>
        <begin position="11"/>
        <end position="23"/>
    </location>
</feature>
<evidence type="ECO:0000250" key="1"/>
<evidence type="ECO:0000256" key="2">
    <source>
        <dbReference type="SAM" id="MobiDB-lite"/>
    </source>
</evidence>
<evidence type="ECO:0000305" key="3"/>
<organism>
    <name type="scientific">Thermoplasma volcanium (strain ATCC 51530 / DSM 4299 / JCM 9571 / NBRC 15438 / GSS1)</name>
    <dbReference type="NCBI Taxonomy" id="273116"/>
    <lineage>
        <taxon>Archaea</taxon>
        <taxon>Methanobacteriati</taxon>
        <taxon>Thermoplasmatota</taxon>
        <taxon>Thermoplasmata</taxon>
        <taxon>Thermoplasmatales</taxon>
        <taxon>Thermoplasmataceae</taxon>
        <taxon>Thermoplasma</taxon>
    </lineage>
</organism>
<comment type="function">
    <text evidence="1">Protein S19 forms a complex with S13 that binds strongly to the 16S ribosomal RNA.</text>
</comment>
<comment type="similarity">
    <text evidence="3">Belongs to the universal ribosomal protein uS19 family.</text>
</comment>
<reference key="1">
    <citation type="journal article" date="2000" name="Proc. Natl. Acad. Sci. U.S.A.">
        <title>Archaeal adaptation to higher temperatures revealed by genomic sequence of Thermoplasma volcanium.</title>
        <authorList>
            <person name="Kawashima T."/>
            <person name="Amano N."/>
            <person name="Koike H."/>
            <person name="Makino S."/>
            <person name="Higuchi S."/>
            <person name="Kawashima-Ohya Y."/>
            <person name="Watanabe K."/>
            <person name="Yamazaki M."/>
            <person name="Kanehori K."/>
            <person name="Kawamoto T."/>
            <person name="Nunoshiba T."/>
            <person name="Yamamoto Y."/>
            <person name="Aramaki H."/>
            <person name="Makino K."/>
            <person name="Suzuki M."/>
        </authorList>
    </citation>
    <scope>NUCLEOTIDE SEQUENCE [LARGE SCALE GENOMIC DNA]</scope>
    <source>
        <strain>ATCC 51530 / DSM 4299 / JCM 9571 / NBRC 15438 / GSS1</strain>
    </source>
</reference>
<dbReference type="EMBL" id="BA000011">
    <property type="protein sequence ID" value="BAB59474.1"/>
    <property type="molecule type" value="Genomic_DNA"/>
</dbReference>
<dbReference type="RefSeq" id="WP_010916586.1">
    <property type="nucleotide sequence ID" value="NC_002689.2"/>
</dbReference>
<dbReference type="SMR" id="Q97BX3"/>
<dbReference type="STRING" id="273116.gene:9381109"/>
<dbReference type="PaxDb" id="273116-14324547"/>
<dbReference type="GeneID" id="1440844"/>
<dbReference type="KEGG" id="tvo:TVG0335396"/>
<dbReference type="eggNOG" id="arCOG04099">
    <property type="taxonomic scope" value="Archaea"/>
</dbReference>
<dbReference type="HOGENOM" id="CLU_097347_1_0_2"/>
<dbReference type="OrthoDB" id="30559at2157"/>
<dbReference type="PhylomeDB" id="Q97BX3"/>
<dbReference type="Proteomes" id="UP000001017">
    <property type="component" value="Chromosome"/>
</dbReference>
<dbReference type="GO" id="GO:0022627">
    <property type="term" value="C:cytosolic small ribosomal subunit"/>
    <property type="evidence" value="ECO:0007669"/>
    <property type="project" value="TreeGrafter"/>
</dbReference>
<dbReference type="GO" id="GO:0019843">
    <property type="term" value="F:rRNA binding"/>
    <property type="evidence" value="ECO:0007669"/>
    <property type="project" value="UniProtKB-UniRule"/>
</dbReference>
<dbReference type="GO" id="GO:0003735">
    <property type="term" value="F:structural constituent of ribosome"/>
    <property type="evidence" value="ECO:0007669"/>
    <property type="project" value="InterPro"/>
</dbReference>
<dbReference type="GO" id="GO:0000028">
    <property type="term" value="P:ribosomal small subunit assembly"/>
    <property type="evidence" value="ECO:0007669"/>
    <property type="project" value="TreeGrafter"/>
</dbReference>
<dbReference type="GO" id="GO:0006412">
    <property type="term" value="P:translation"/>
    <property type="evidence" value="ECO:0007669"/>
    <property type="project" value="UniProtKB-UniRule"/>
</dbReference>
<dbReference type="FunFam" id="3.30.860.10:FF:000002">
    <property type="entry name" value="40S ribosomal protein S15"/>
    <property type="match status" value="1"/>
</dbReference>
<dbReference type="Gene3D" id="3.30.860.10">
    <property type="entry name" value="30s Ribosomal Protein S19, Chain A"/>
    <property type="match status" value="1"/>
</dbReference>
<dbReference type="HAMAP" id="MF_00531">
    <property type="entry name" value="Ribosomal_uS19"/>
    <property type="match status" value="1"/>
</dbReference>
<dbReference type="InterPro" id="IPR002222">
    <property type="entry name" value="Ribosomal_uS19"/>
</dbReference>
<dbReference type="InterPro" id="IPR020934">
    <property type="entry name" value="Ribosomal_uS19_CS"/>
</dbReference>
<dbReference type="InterPro" id="IPR005713">
    <property type="entry name" value="Ribosomal_uS19_euk/arc"/>
</dbReference>
<dbReference type="InterPro" id="IPR023575">
    <property type="entry name" value="Ribosomal_uS19_SF"/>
</dbReference>
<dbReference type="NCBIfam" id="NF003121">
    <property type="entry name" value="PRK04038.1"/>
    <property type="match status" value="1"/>
</dbReference>
<dbReference type="NCBIfam" id="TIGR01025">
    <property type="entry name" value="uS19_arch"/>
    <property type="match status" value="1"/>
</dbReference>
<dbReference type="PANTHER" id="PTHR11880">
    <property type="entry name" value="RIBOSOMAL PROTEIN S19P FAMILY MEMBER"/>
    <property type="match status" value="1"/>
</dbReference>
<dbReference type="PANTHER" id="PTHR11880:SF2">
    <property type="entry name" value="SMALL RIBOSOMAL SUBUNIT PROTEIN US19"/>
    <property type="match status" value="1"/>
</dbReference>
<dbReference type="Pfam" id="PF00203">
    <property type="entry name" value="Ribosomal_S19"/>
    <property type="match status" value="1"/>
</dbReference>
<dbReference type="PIRSF" id="PIRSF002144">
    <property type="entry name" value="Ribosomal_S19"/>
    <property type="match status" value="1"/>
</dbReference>
<dbReference type="PRINTS" id="PR00975">
    <property type="entry name" value="RIBOSOMALS19"/>
</dbReference>
<dbReference type="SUPFAM" id="SSF54570">
    <property type="entry name" value="Ribosomal protein S19"/>
    <property type="match status" value="1"/>
</dbReference>
<dbReference type="PROSITE" id="PS00323">
    <property type="entry name" value="RIBOSOMAL_S19"/>
    <property type="match status" value="1"/>
</dbReference>